<reference key="1">
    <citation type="journal article" date="2006" name="PLoS Genet.">
        <title>Comparative genomics of emerging human ehrlichiosis agents.</title>
        <authorList>
            <person name="Dunning Hotopp J.C."/>
            <person name="Lin M."/>
            <person name="Madupu R."/>
            <person name="Crabtree J."/>
            <person name="Angiuoli S.V."/>
            <person name="Eisen J.A."/>
            <person name="Seshadri R."/>
            <person name="Ren Q."/>
            <person name="Wu M."/>
            <person name="Utterback T.R."/>
            <person name="Smith S."/>
            <person name="Lewis M."/>
            <person name="Khouri H."/>
            <person name="Zhang C."/>
            <person name="Niu H."/>
            <person name="Lin Q."/>
            <person name="Ohashi N."/>
            <person name="Zhi N."/>
            <person name="Nelson W.C."/>
            <person name="Brinkac L.M."/>
            <person name="Dodson R.J."/>
            <person name="Rosovitz M.J."/>
            <person name="Sundaram J.P."/>
            <person name="Daugherty S.C."/>
            <person name="Davidsen T."/>
            <person name="Durkin A.S."/>
            <person name="Gwinn M.L."/>
            <person name="Haft D.H."/>
            <person name="Selengut J.D."/>
            <person name="Sullivan S.A."/>
            <person name="Zafar N."/>
            <person name="Zhou L."/>
            <person name="Benahmed F."/>
            <person name="Forberger H."/>
            <person name="Halpin R."/>
            <person name="Mulligan S."/>
            <person name="Robinson J."/>
            <person name="White O."/>
            <person name="Rikihisa Y."/>
            <person name="Tettelin H."/>
        </authorList>
    </citation>
    <scope>NUCLEOTIDE SEQUENCE [LARGE SCALE GENOMIC DNA]</scope>
    <source>
        <strain>ATCC CRL-10679 / Arkansas</strain>
    </source>
</reference>
<evidence type="ECO:0000255" key="1">
    <source>
        <dbReference type="HAMAP-Rule" id="MF_00291"/>
    </source>
</evidence>
<evidence type="ECO:0000256" key="2">
    <source>
        <dbReference type="SAM" id="MobiDB-lite"/>
    </source>
</evidence>
<evidence type="ECO:0000305" key="3"/>
<comment type="similarity">
    <text evidence="1">Belongs to the universal ribosomal protein uS2 family.</text>
</comment>
<accession>Q2GGV4</accession>
<proteinExistence type="inferred from homology"/>
<gene>
    <name evidence="1" type="primary">rpsB</name>
    <name type="ordered locus">ECH_0514</name>
</gene>
<feature type="chain" id="PRO_1000003956" description="Small ribosomal subunit protein uS2">
    <location>
        <begin position="1"/>
        <end position="288"/>
    </location>
</feature>
<feature type="region of interest" description="Disordered" evidence="2">
    <location>
        <begin position="255"/>
        <end position="288"/>
    </location>
</feature>
<organism>
    <name type="scientific">Ehrlichia chaffeensis (strain ATCC CRL-10679 / Arkansas)</name>
    <dbReference type="NCBI Taxonomy" id="205920"/>
    <lineage>
        <taxon>Bacteria</taxon>
        <taxon>Pseudomonadati</taxon>
        <taxon>Pseudomonadota</taxon>
        <taxon>Alphaproteobacteria</taxon>
        <taxon>Rickettsiales</taxon>
        <taxon>Anaplasmataceae</taxon>
        <taxon>Ehrlichia</taxon>
    </lineage>
</organism>
<protein>
    <recommendedName>
        <fullName evidence="1">Small ribosomal subunit protein uS2</fullName>
    </recommendedName>
    <alternativeName>
        <fullName evidence="3">30S ribosomal protein S2</fullName>
    </alternativeName>
</protein>
<sequence length="288" mass="32342">MVNLPKFTMRDLVESGVHFGHKASRWNPKMAPYIYGVHNDIHIINLQNTVVLLKNALKALYDIVLKRGRVLFIGTKVQASAIIADEAVRCGQYYINNRWLGGMLTNWETISLSIKKLKEYEKLIENVDNQFTKKELLLFEKKRAKLDRSIGGICNMGGLPHALFVIDTNKEHIAIKEANKLNIPVIAVLDTNSDPAGIDYPIPGNDDAVRSIDFFCKIVSDTILEAIRSDLAKSGINVDGIKDFSVEKREDLLRANNRDHKNNKNNSTIDNAENLKEENLVGGSNNES</sequence>
<name>RS2_EHRCR</name>
<keyword id="KW-1185">Reference proteome</keyword>
<keyword id="KW-0687">Ribonucleoprotein</keyword>
<keyword id="KW-0689">Ribosomal protein</keyword>
<dbReference type="EMBL" id="CP000236">
    <property type="protein sequence ID" value="ABD44907.1"/>
    <property type="molecule type" value="Genomic_DNA"/>
</dbReference>
<dbReference type="RefSeq" id="WP_006010913.1">
    <property type="nucleotide sequence ID" value="NC_007799.1"/>
</dbReference>
<dbReference type="SMR" id="Q2GGV4"/>
<dbReference type="STRING" id="205920.ECH_0514"/>
<dbReference type="KEGG" id="ech:ECH_0514"/>
<dbReference type="eggNOG" id="COG0052">
    <property type="taxonomic scope" value="Bacteria"/>
</dbReference>
<dbReference type="HOGENOM" id="CLU_040318_2_1_5"/>
<dbReference type="OrthoDB" id="9808036at2"/>
<dbReference type="Proteomes" id="UP000008320">
    <property type="component" value="Chromosome"/>
</dbReference>
<dbReference type="GO" id="GO:0022627">
    <property type="term" value="C:cytosolic small ribosomal subunit"/>
    <property type="evidence" value="ECO:0007669"/>
    <property type="project" value="TreeGrafter"/>
</dbReference>
<dbReference type="GO" id="GO:0003735">
    <property type="term" value="F:structural constituent of ribosome"/>
    <property type="evidence" value="ECO:0007669"/>
    <property type="project" value="InterPro"/>
</dbReference>
<dbReference type="GO" id="GO:0006412">
    <property type="term" value="P:translation"/>
    <property type="evidence" value="ECO:0007669"/>
    <property type="project" value="UniProtKB-UniRule"/>
</dbReference>
<dbReference type="CDD" id="cd01425">
    <property type="entry name" value="RPS2"/>
    <property type="match status" value="1"/>
</dbReference>
<dbReference type="Gene3D" id="3.40.50.10490">
    <property type="entry name" value="Glucose-6-phosphate isomerase like protein, domain 1"/>
    <property type="match status" value="1"/>
</dbReference>
<dbReference type="Gene3D" id="1.10.287.610">
    <property type="entry name" value="Helix hairpin bin"/>
    <property type="match status" value="1"/>
</dbReference>
<dbReference type="HAMAP" id="MF_00291_B">
    <property type="entry name" value="Ribosomal_uS2_B"/>
    <property type="match status" value="1"/>
</dbReference>
<dbReference type="InterPro" id="IPR001865">
    <property type="entry name" value="Ribosomal_uS2"/>
</dbReference>
<dbReference type="InterPro" id="IPR005706">
    <property type="entry name" value="Ribosomal_uS2_bac/mit/plastid"/>
</dbReference>
<dbReference type="InterPro" id="IPR018130">
    <property type="entry name" value="Ribosomal_uS2_CS"/>
</dbReference>
<dbReference type="InterPro" id="IPR023591">
    <property type="entry name" value="Ribosomal_uS2_flav_dom_sf"/>
</dbReference>
<dbReference type="NCBIfam" id="TIGR01011">
    <property type="entry name" value="rpsB_bact"/>
    <property type="match status" value="1"/>
</dbReference>
<dbReference type="PANTHER" id="PTHR12534">
    <property type="entry name" value="30S RIBOSOMAL PROTEIN S2 PROKARYOTIC AND ORGANELLAR"/>
    <property type="match status" value="1"/>
</dbReference>
<dbReference type="PANTHER" id="PTHR12534:SF0">
    <property type="entry name" value="SMALL RIBOSOMAL SUBUNIT PROTEIN US2M"/>
    <property type="match status" value="1"/>
</dbReference>
<dbReference type="Pfam" id="PF00318">
    <property type="entry name" value="Ribosomal_S2"/>
    <property type="match status" value="1"/>
</dbReference>
<dbReference type="PRINTS" id="PR00395">
    <property type="entry name" value="RIBOSOMALS2"/>
</dbReference>
<dbReference type="SUPFAM" id="SSF52313">
    <property type="entry name" value="Ribosomal protein S2"/>
    <property type="match status" value="1"/>
</dbReference>
<dbReference type="PROSITE" id="PS00962">
    <property type="entry name" value="RIBOSOMAL_S2_1"/>
    <property type="match status" value="1"/>
</dbReference>
<dbReference type="PROSITE" id="PS00963">
    <property type="entry name" value="RIBOSOMAL_S2_2"/>
    <property type="match status" value="1"/>
</dbReference>